<gene>
    <name type="ORF">ORF91a</name>
</gene>
<comment type="subcellular location">
    <subcellularLocation>
        <location evidence="2">Host membrane</location>
        <topology evidence="2">Multi-pass membrane protein</topology>
    </subcellularLocation>
</comment>
<reference key="1">
    <citation type="journal article" date="2007" name="Virology">
        <title>Genome of the Acidianus bottle-shaped virus and insights into the replication and packaging mechanisms.</title>
        <authorList>
            <person name="Peng X."/>
            <person name="Basta T."/>
            <person name="Haring M."/>
            <person name="Garrett R.A."/>
            <person name="Prangishvili D."/>
        </authorList>
    </citation>
    <scope>NUCLEOTIDE SEQUENCE [GENOMIC DNA]</scope>
</reference>
<feature type="chain" id="PRO_0000384841" description="Putative transmembrane protein ORF91a">
    <location>
        <begin position="1"/>
        <end position="91"/>
    </location>
</feature>
<feature type="transmembrane region" description="Helical" evidence="1">
    <location>
        <begin position="17"/>
        <end position="37"/>
    </location>
</feature>
<feature type="transmembrane region" description="Helical" evidence="1">
    <location>
        <begin position="40"/>
        <end position="60"/>
    </location>
</feature>
<feature type="transmembrane region" description="Helical" evidence="1">
    <location>
        <begin position="69"/>
        <end position="89"/>
    </location>
</feature>
<sequence length="91" mass="9612">MALVEAVEPIIYGNTKTGISFDSITGAIIAGVVVGLAKTAFLGKFPDYVEVLIGVGLLFMYGQYDLLRGIGFVLTADGIYGLIKNYISTSS</sequence>
<protein>
    <recommendedName>
        <fullName>Putative transmembrane protein ORF91a</fullName>
    </recommendedName>
</protein>
<name>Y091A_ABVP</name>
<evidence type="ECO:0000255" key="1"/>
<evidence type="ECO:0000305" key="2"/>
<accession>A4ZUC4</accession>
<proteinExistence type="predicted"/>
<organismHost>
    <name type="scientific">Acidianus convivator</name>
    <dbReference type="NCBI Taxonomy" id="269667"/>
</organismHost>
<organism>
    <name type="scientific">Acidianus bottle-shaped virus (isolate Italy/Pozzuoli)</name>
    <name type="common">ABV</name>
    <dbReference type="NCBI Taxonomy" id="654911"/>
    <lineage>
        <taxon>Viruses</taxon>
        <taxon>Viruses incertae sedis</taxon>
        <taxon>Ampullaviridae</taxon>
        <taxon>Bottigliavirus</taxon>
        <taxon>Bottigliavirus ABV</taxon>
    </lineage>
</organism>
<dbReference type="EMBL" id="EF432053">
    <property type="protein sequence ID" value="ABP73428.1"/>
    <property type="molecule type" value="Genomic_DNA"/>
</dbReference>
<dbReference type="RefSeq" id="YP_001210342.1">
    <property type="nucleotide sequence ID" value="NC_009452.1"/>
</dbReference>
<dbReference type="GeneID" id="5129852"/>
<dbReference type="KEGG" id="vg:5129852"/>
<dbReference type="Proteomes" id="UP000000513">
    <property type="component" value="Segment"/>
</dbReference>
<dbReference type="GO" id="GO:0033644">
    <property type="term" value="C:host cell membrane"/>
    <property type="evidence" value="ECO:0007669"/>
    <property type="project" value="UniProtKB-SubCell"/>
</dbReference>
<dbReference type="GO" id="GO:0016020">
    <property type="term" value="C:membrane"/>
    <property type="evidence" value="ECO:0007669"/>
    <property type="project" value="UniProtKB-KW"/>
</dbReference>
<keyword id="KW-1043">Host membrane</keyword>
<keyword id="KW-0472">Membrane</keyword>
<keyword id="KW-1185">Reference proteome</keyword>
<keyword id="KW-0812">Transmembrane</keyword>
<keyword id="KW-1133">Transmembrane helix</keyword>